<feature type="chain" id="PRO_1000009645" description="Phosphoglycerate kinase">
    <location>
        <begin position="1"/>
        <end position="392"/>
    </location>
</feature>
<feature type="binding site" evidence="1">
    <location>
        <begin position="21"/>
        <end position="23"/>
    </location>
    <ligand>
        <name>substrate</name>
    </ligand>
</feature>
<feature type="binding site" evidence="1">
    <location>
        <position position="36"/>
    </location>
    <ligand>
        <name>substrate</name>
    </ligand>
</feature>
<feature type="binding site" evidence="1">
    <location>
        <begin position="59"/>
        <end position="62"/>
    </location>
    <ligand>
        <name>substrate</name>
    </ligand>
</feature>
<feature type="binding site" evidence="1">
    <location>
        <position position="117"/>
    </location>
    <ligand>
        <name>substrate</name>
    </ligand>
</feature>
<feature type="binding site" evidence="1">
    <location>
        <position position="150"/>
    </location>
    <ligand>
        <name>substrate</name>
    </ligand>
</feature>
<feature type="binding site" evidence="1">
    <location>
        <position position="200"/>
    </location>
    <ligand>
        <name>ATP</name>
        <dbReference type="ChEBI" id="CHEBI:30616"/>
    </ligand>
</feature>
<feature type="binding site" evidence="1">
    <location>
        <position position="288"/>
    </location>
    <ligand>
        <name>ATP</name>
        <dbReference type="ChEBI" id="CHEBI:30616"/>
    </ligand>
</feature>
<feature type="binding site" evidence="1">
    <location>
        <position position="319"/>
    </location>
    <ligand>
        <name>ATP</name>
        <dbReference type="ChEBI" id="CHEBI:30616"/>
    </ligand>
</feature>
<feature type="binding site" evidence="1">
    <location>
        <begin position="345"/>
        <end position="348"/>
    </location>
    <ligand>
        <name>ATP</name>
        <dbReference type="ChEBI" id="CHEBI:30616"/>
    </ligand>
</feature>
<proteinExistence type="inferred from homology"/>
<reference key="1">
    <citation type="submission" date="2006-06" db="EMBL/GenBank/DDBJ databases">
        <title>Complete sequence of Rubrobacter xylanophilus DSM 9941.</title>
        <authorList>
            <consortium name="US DOE Joint Genome Institute"/>
            <person name="Copeland A."/>
            <person name="Lucas S."/>
            <person name="Lapidus A."/>
            <person name="Barry K."/>
            <person name="Detter J.C."/>
            <person name="Glavina del Rio T."/>
            <person name="Hammon N."/>
            <person name="Israni S."/>
            <person name="Dalin E."/>
            <person name="Tice H."/>
            <person name="Pitluck S."/>
            <person name="Munk A.C."/>
            <person name="Brettin T."/>
            <person name="Bruce D."/>
            <person name="Han C."/>
            <person name="Tapia R."/>
            <person name="Gilna P."/>
            <person name="Schmutz J."/>
            <person name="Larimer F."/>
            <person name="Land M."/>
            <person name="Hauser L."/>
            <person name="Kyrpides N."/>
            <person name="Lykidis A."/>
            <person name="da Costa M.S."/>
            <person name="Rainey F.A."/>
            <person name="Empadinhas N."/>
            <person name="Jolivet E."/>
            <person name="Battista J.R."/>
            <person name="Richardson P."/>
        </authorList>
    </citation>
    <scope>NUCLEOTIDE SEQUENCE [LARGE SCALE GENOMIC DNA]</scope>
    <source>
        <strain>DSM 9941 / JCM 11954 / NBRC 16129 / PRD-1</strain>
    </source>
</reference>
<name>PGK_RUBXD</name>
<organism>
    <name type="scientific">Rubrobacter xylanophilus (strain DSM 9941 / JCM 11954 / NBRC 16129 / PRD-1)</name>
    <dbReference type="NCBI Taxonomy" id="266117"/>
    <lineage>
        <taxon>Bacteria</taxon>
        <taxon>Bacillati</taxon>
        <taxon>Actinomycetota</taxon>
        <taxon>Rubrobacteria</taxon>
        <taxon>Rubrobacterales</taxon>
        <taxon>Rubrobacteraceae</taxon>
        <taxon>Rubrobacter</taxon>
    </lineage>
</organism>
<protein>
    <recommendedName>
        <fullName evidence="1">Phosphoglycerate kinase</fullName>
        <ecNumber evidence="1">2.7.2.3</ecNumber>
    </recommendedName>
</protein>
<keyword id="KW-0067">ATP-binding</keyword>
<keyword id="KW-0963">Cytoplasm</keyword>
<keyword id="KW-0324">Glycolysis</keyword>
<keyword id="KW-0418">Kinase</keyword>
<keyword id="KW-0547">Nucleotide-binding</keyword>
<keyword id="KW-1185">Reference proteome</keyword>
<keyword id="KW-0808">Transferase</keyword>
<comment type="catalytic activity">
    <reaction evidence="1">
        <text>(2R)-3-phosphoglycerate + ATP = (2R)-3-phospho-glyceroyl phosphate + ADP</text>
        <dbReference type="Rhea" id="RHEA:14801"/>
        <dbReference type="ChEBI" id="CHEBI:30616"/>
        <dbReference type="ChEBI" id="CHEBI:57604"/>
        <dbReference type="ChEBI" id="CHEBI:58272"/>
        <dbReference type="ChEBI" id="CHEBI:456216"/>
        <dbReference type="EC" id="2.7.2.3"/>
    </reaction>
</comment>
<comment type="pathway">
    <text evidence="1">Carbohydrate degradation; glycolysis; pyruvate from D-glyceraldehyde 3-phosphate: step 2/5.</text>
</comment>
<comment type="subunit">
    <text evidence="1">Monomer.</text>
</comment>
<comment type="subcellular location">
    <subcellularLocation>
        <location evidence="1">Cytoplasm</location>
    </subcellularLocation>
</comment>
<comment type="similarity">
    <text evidence="1">Belongs to the phosphoglycerate kinase family.</text>
</comment>
<gene>
    <name evidence="1" type="primary">pgk</name>
    <name type="ordered locus">Rxyl_2004</name>
</gene>
<dbReference type="EC" id="2.7.2.3" evidence="1"/>
<dbReference type="EMBL" id="CP000386">
    <property type="protein sequence ID" value="ABG04951.1"/>
    <property type="molecule type" value="Genomic_DNA"/>
</dbReference>
<dbReference type="RefSeq" id="WP_011564966.1">
    <property type="nucleotide sequence ID" value="NC_008148.1"/>
</dbReference>
<dbReference type="SMR" id="Q1AUH7"/>
<dbReference type="STRING" id="266117.Rxyl_2004"/>
<dbReference type="KEGG" id="rxy:Rxyl_2004"/>
<dbReference type="eggNOG" id="COG0126">
    <property type="taxonomic scope" value="Bacteria"/>
</dbReference>
<dbReference type="HOGENOM" id="CLU_025427_0_2_11"/>
<dbReference type="OrthoDB" id="9808460at2"/>
<dbReference type="PhylomeDB" id="Q1AUH7"/>
<dbReference type="UniPathway" id="UPA00109">
    <property type="reaction ID" value="UER00185"/>
</dbReference>
<dbReference type="Proteomes" id="UP000006637">
    <property type="component" value="Chromosome"/>
</dbReference>
<dbReference type="GO" id="GO:0005829">
    <property type="term" value="C:cytosol"/>
    <property type="evidence" value="ECO:0007669"/>
    <property type="project" value="TreeGrafter"/>
</dbReference>
<dbReference type="GO" id="GO:0043531">
    <property type="term" value="F:ADP binding"/>
    <property type="evidence" value="ECO:0007669"/>
    <property type="project" value="TreeGrafter"/>
</dbReference>
<dbReference type="GO" id="GO:0005524">
    <property type="term" value="F:ATP binding"/>
    <property type="evidence" value="ECO:0007669"/>
    <property type="project" value="UniProtKB-KW"/>
</dbReference>
<dbReference type="GO" id="GO:0004618">
    <property type="term" value="F:phosphoglycerate kinase activity"/>
    <property type="evidence" value="ECO:0007669"/>
    <property type="project" value="UniProtKB-UniRule"/>
</dbReference>
<dbReference type="GO" id="GO:0006094">
    <property type="term" value="P:gluconeogenesis"/>
    <property type="evidence" value="ECO:0007669"/>
    <property type="project" value="TreeGrafter"/>
</dbReference>
<dbReference type="GO" id="GO:0006096">
    <property type="term" value="P:glycolytic process"/>
    <property type="evidence" value="ECO:0007669"/>
    <property type="project" value="UniProtKB-UniRule"/>
</dbReference>
<dbReference type="CDD" id="cd00318">
    <property type="entry name" value="Phosphoglycerate_kinase"/>
    <property type="match status" value="1"/>
</dbReference>
<dbReference type="FunFam" id="3.40.50.1260:FF:000003">
    <property type="entry name" value="Phosphoglycerate kinase"/>
    <property type="match status" value="1"/>
</dbReference>
<dbReference type="FunFam" id="3.40.50.1260:FF:000006">
    <property type="entry name" value="Phosphoglycerate kinase"/>
    <property type="match status" value="1"/>
</dbReference>
<dbReference type="Gene3D" id="3.40.50.1260">
    <property type="entry name" value="Phosphoglycerate kinase, N-terminal domain"/>
    <property type="match status" value="2"/>
</dbReference>
<dbReference type="HAMAP" id="MF_00145">
    <property type="entry name" value="Phosphoglyc_kinase"/>
    <property type="match status" value="1"/>
</dbReference>
<dbReference type="InterPro" id="IPR001576">
    <property type="entry name" value="Phosphoglycerate_kinase"/>
</dbReference>
<dbReference type="InterPro" id="IPR015911">
    <property type="entry name" value="Phosphoglycerate_kinase_CS"/>
</dbReference>
<dbReference type="InterPro" id="IPR015824">
    <property type="entry name" value="Phosphoglycerate_kinase_N"/>
</dbReference>
<dbReference type="InterPro" id="IPR036043">
    <property type="entry name" value="Phosphoglycerate_kinase_sf"/>
</dbReference>
<dbReference type="PANTHER" id="PTHR11406">
    <property type="entry name" value="PHOSPHOGLYCERATE KINASE"/>
    <property type="match status" value="1"/>
</dbReference>
<dbReference type="PANTHER" id="PTHR11406:SF23">
    <property type="entry name" value="PHOSPHOGLYCERATE KINASE 1, CHLOROPLASTIC-RELATED"/>
    <property type="match status" value="1"/>
</dbReference>
<dbReference type="Pfam" id="PF00162">
    <property type="entry name" value="PGK"/>
    <property type="match status" value="1"/>
</dbReference>
<dbReference type="PIRSF" id="PIRSF000724">
    <property type="entry name" value="Pgk"/>
    <property type="match status" value="1"/>
</dbReference>
<dbReference type="PRINTS" id="PR00477">
    <property type="entry name" value="PHGLYCKINASE"/>
</dbReference>
<dbReference type="SUPFAM" id="SSF53748">
    <property type="entry name" value="Phosphoglycerate kinase"/>
    <property type="match status" value="1"/>
</dbReference>
<dbReference type="PROSITE" id="PS00111">
    <property type="entry name" value="PGLYCERATE_KINASE"/>
    <property type="match status" value="1"/>
</dbReference>
<accession>Q1AUH7</accession>
<sequence>MDKRSVRDLELRGKKVLVRVDFNVPVKGGEVTDDTRIRRALPTIRYLLQRGARVALISHLGRPKGEPDPRYRMDPVARRLEELLGEPVRKLDTATGPEVGRALEELERGVILLENSRFYPGETKNDPAFAAELAGPFDLYVNDAFGAAHRAHATTVGVAERLPAAAGFLLEQELDYLDGVLRSPERPFVAILGGAKVSDKLGVIESLLGVADRLLVGGAMCFTFLKARGLGVGASLVEDDYLGEARRLMEGAADRLVLPVDVVVAERMEEGARTRTVPVEEIPEGWMGLDIGPRTVELFRRHILQARTIFWNGPMGVFEIDAFARGTEGVARAVAESGATSVVGGGDSVAAVRKLGLEDRMSHISTGGGASLEYVEGRELPGVAVLPEREEV</sequence>
<evidence type="ECO:0000255" key="1">
    <source>
        <dbReference type="HAMAP-Rule" id="MF_00145"/>
    </source>
</evidence>